<gene>
    <name evidence="6" type="primary">FH1</name>
    <name evidence="8" type="ORF">LMJF_24_0320</name>
</gene>
<organism>
    <name type="scientific">Leishmania major</name>
    <dbReference type="NCBI Taxonomy" id="5664"/>
    <lineage>
        <taxon>Eukaryota</taxon>
        <taxon>Discoba</taxon>
        <taxon>Euglenozoa</taxon>
        <taxon>Kinetoplastea</taxon>
        <taxon>Metakinetoplastina</taxon>
        <taxon>Trypanosomatida</taxon>
        <taxon>Trypanosomatidae</taxon>
        <taxon>Leishmaniinae</taxon>
        <taxon>Leishmania</taxon>
    </lineage>
</organism>
<name>FUM1_LEIMA</name>
<comment type="function">
    <text evidence="4 5 7">Catalyzes the reversible hydration of fumarate to (S)-malate (PubMed:22569531, PubMed:30645090). Catalyzes the hydration of fumarate to L-malate in the tricarboxylic acid (TCA) cycle to facilitate a transition step in the production of energy in the form of NADH (Probable).</text>
</comment>
<comment type="catalytic activity">
    <reaction evidence="4 5">
        <text>(S)-malate = fumarate + H2O</text>
        <dbReference type="Rhea" id="RHEA:12460"/>
        <dbReference type="ChEBI" id="CHEBI:15377"/>
        <dbReference type="ChEBI" id="CHEBI:15589"/>
        <dbReference type="ChEBI" id="CHEBI:29806"/>
        <dbReference type="EC" id="4.2.1.2"/>
    </reaction>
    <physiologicalReaction direction="left-to-right" evidence="4">
        <dbReference type="Rhea" id="RHEA:12461"/>
    </physiologicalReaction>
    <physiologicalReaction direction="right-to-left" evidence="4">
        <dbReference type="Rhea" id="RHEA:12462"/>
    </physiologicalReaction>
</comment>
<comment type="cofactor">
    <cofactor evidence="5">
        <name>[4Fe-4S] cluster</name>
        <dbReference type="ChEBI" id="CHEBI:49883"/>
    </cofactor>
    <text evidence="5">Binds 1 [4Fe-4S] cluster per subunit.</text>
</comment>
<comment type="activity regulation">
    <text evidence="5">Specifically and competitively inhibited by 2-thiomalate, which coordinates with the catalytic [4Fe-4S] cluster.</text>
</comment>
<comment type="biophysicochemical properties">
    <kinetics>
        <KM evidence="4">1.3 mM for fumarate (in anaerobic conditions)</KM>
        <KM evidence="4">2.5 mM for fumarate (in aerobic conditions)</KM>
        <KM evidence="4">2.3 mM for (S)-malate (in anaerobic conditions)</KM>
        <KM evidence="4">1.2 mM for (S)-malate (in aerobic conditions)</KM>
        <Vmax>26.4 umol/min/mg enzyme with fumarate as substrate (in anaerobic conditions)</Vmax>
        <Vmax>1.8 umol/min/mg enzyme with fumarate as substrate (in aerobic conditions)</Vmax>
        <Vmax>11.8 umol/min/mg enzyme with (S)-malate as substrate (in anaerobic conditions)</Vmax>
        <Vmax>0.5 umol/min/mg enzyme with (S)-malate as substrate (in aerobic conditions)</Vmax>
        <text evidence="4">kcat is 28.3 sec(-1) for fumarate (in anaerobic conditions) (PubMed:22569531). kcat is 1.9 sec(-1) for fumarate (in aerobic conditions) (PubMed:22569531). kcat is 12.9 sec(-1) for (S)-malate (in anaerobic conditions) (PubMed:22569531). kcat is 0.55 sec(-1) for (S)-malate (in aerobic conditions) (PubMed:22569531).</text>
    </kinetics>
    <phDependence>
        <text evidence="4">Optimum pH is 8.7.</text>
    </phDependence>
</comment>
<comment type="pathway">
    <text evidence="2">Carbohydrate metabolism; tricarboxylic acid cycle; (S)-malate from fumarate: step 1/1.</text>
</comment>
<comment type="subunit">
    <text evidence="5">Homodimer.</text>
</comment>
<comment type="subcellular location">
    <subcellularLocation>
        <location evidence="4">Mitochondrion</location>
    </subcellularLocation>
</comment>
<comment type="similarity">
    <text evidence="7">Belongs to the class-I fumarase family.</text>
</comment>
<feature type="transit peptide" description="Mitochondrion" evidence="3">
    <location>
        <begin position="1"/>
        <end status="unknown"/>
    </location>
</feature>
<feature type="chain" id="PRO_0000447005" description="Fumarate hydratase 1, mitochondrial">
    <location>
        <begin status="unknown"/>
        <end position="549"/>
    </location>
</feature>
<feature type="binding site" evidence="5 9">
    <location>
        <position position="114"/>
    </location>
    <ligand>
        <name>[4Fe-4S] cluster</name>
        <dbReference type="ChEBI" id="CHEBI:49883"/>
    </ligand>
</feature>
<feature type="binding site" evidence="1">
    <location>
        <begin position="115"/>
        <end position="116"/>
    </location>
    <ligand>
        <name>(S)-malate</name>
        <dbReference type="ChEBI" id="CHEBI:15589"/>
        <label>1</label>
    </ligand>
</feature>
<feature type="binding site" evidence="1">
    <location>
        <position position="154"/>
    </location>
    <ligand>
        <name>(S)-malate</name>
        <dbReference type="ChEBI" id="CHEBI:15589"/>
        <label>1</label>
    </ligand>
</feature>
<feature type="binding site" evidence="1">
    <location>
        <position position="197"/>
    </location>
    <ligand>
        <name>(S)-malate</name>
        <dbReference type="ChEBI" id="CHEBI:15589"/>
        <label>1</label>
    </ligand>
</feature>
<feature type="binding site" evidence="1">
    <location>
        <begin position="200"/>
        <end position="206"/>
    </location>
    <ligand>
        <name>(S)-malate</name>
        <dbReference type="ChEBI" id="CHEBI:15589"/>
        <label>2</label>
    </ligand>
</feature>
<feature type="binding site" evidence="5 9">
    <location>
        <position position="233"/>
    </location>
    <ligand>
        <name>[4Fe-4S] cluster</name>
        <dbReference type="ChEBI" id="CHEBI:49883"/>
    </ligand>
</feature>
<feature type="binding site" evidence="5 9">
    <location>
        <position position="328"/>
    </location>
    <ligand>
        <name>[4Fe-4S] cluster</name>
        <dbReference type="ChEBI" id="CHEBI:49883"/>
    </ligand>
</feature>
<feature type="binding site" evidence="1">
    <location>
        <position position="404"/>
    </location>
    <ligand>
        <name>(S)-malate</name>
        <dbReference type="ChEBI" id="CHEBI:15589"/>
        <label>1</label>
    </ligand>
</feature>
<feature type="binding site" evidence="1">
    <location>
        <begin position="450"/>
        <end position="454"/>
    </location>
    <ligand>
        <name>(S)-malate</name>
        <dbReference type="ChEBI" id="CHEBI:15589"/>
        <label>1</label>
    </ligand>
</feature>
<feature type="binding site" evidence="1">
    <location>
        <position position="474"/>
    </location>
    <ligand>
        <name>(S)-malate</name>
        <dbReference type="ChEBI" id="CHEBI:15589"/>
        <label>1</label>
    </ligand>
</feature>
<feature type="strand" evidence="10">
    <location>
        <begin position="28"/>
        <end position="33"/>
    </location>
</feature>
<feature type="strand" evidence="10">
    <location>
        <begin position="36"/>
        <end position="39"/>
    </location>
</feature>
<feature type="strand" evidence="10">
    <location>
        <begin position="48"/>
        <end position="51"/>
    </location>
</feature>
<feature type="helix" evidence="10">
    <location>
        <begin position="54"/>
        <end position="69"/>
    </location>
</feature>
<feature type="helix" evidence="10">
    <location>
        <begin position="73"/>
        <end position="84"/>
    </location>
</feature>
<feature type="helix" evidence="10">
    <location>
        <begin position="90"/>
        <end position="106"/>
    </location>
</feature>
<feature type="strand" evidence="10">
    <location>
        <begin position="109"/>
        <end position="111"/>
    </location>
</feature>
<feature type="strand" evidence="10">
    <location>
        <begin position="113"/>
        <end position="115"/>
    </location>
</feature>
<feature type="strand" evidence="10">
    <location>
        <begin position="119"/>
        <end position="127"/>
    </location>
</feature>
<feature type="helix" evidence="10">
    <location>
        <begin position="136"/>
        <end position="150"/>
    </location>
</feature>
<feature type="strand" evidence="10">
    <location>
        <begin position="157"/>
        <end position="164"/>
    </location>
</feature>
<feature type="strand" evidence="10">
    <location>
        <begin position="166"/>
        <end position="168"/>
    </location>
</feature>
<feature type="strand" evidence="10">
    <location>
        <begin position="176"/>
        <end position="185"/>
    </location>
</feature>
<feature type="strand" evidence="10">
    <location>
        <begin position="187"/>
        <end position="194"/>
    </location>
</feature>
<feature type="helix" evidence="10">
    <location>
        <begin position="196"/>
        <end position="199"/>
    </location>
</feature>
<feature type="strand" evidence="10">
    <location>
        <begin position="203"/>
        <end position="207"/>
    </location>
</feature>
<feature type="helix" evidence="10">
    <location>
        <begin position="209"/>
        <end position="211"/>
    </location>
</feature>
<feature type="helix" evidence="10">
    <location>
        <begin position="214"/>
        <end position="225"/>
    </location>
</feature>
<feature type="turn" evidence="10">
    <location>
        <begin position="229"/>
        <end position="232"/>
    </location>
</feature>
<feature type="strand" evidence="10">
    <location>
        <begin position="234"/>
        <end position="242"/>
    </location>
</feature>
<feature type="helix" evidence="10">
    <location>
        <begin position="247"/>
        <end position="258"/>
    </location>
</feature>
<feature type="turn" evidence="10">
    <location>
        <begin position="259"/>
        <end position="264"/>
    </location>
</feature>
<feature type="strand" evidence="10">
    <location>
        <begin position="271"/>
        <end position="273"/>
    </location>
</feature>
<feature type="helix" evidence="10">
    <location>
        <begin position="280"/>
        <end position="291"/>
    </location>
</feature>
<feature type="strand" evidence="10">
    <location>
        <begin position="293"/>
        <end position="295"/>
    </location>
</feature>
<feature type="turn" evidence="10">
    <location>
        <begin position="296"/>
        <end position="299"/>
    </location>
</feature>
<feature type="strand" evidence="10">
    <location>
        <begin position="300"/>
        <end position="302"/>
    </location>
</feature>
<feature type="strand" evidence="10">
    <location>
        <begin position="304"/>
        <end position="312"/>
    </location>
</feature>
<feature type="strand" evidence="10">
    <location>
        <begin position="320"/>
        <end position="327"/>
    </location>
</feature>
<feature type="strand" evidence="10">
    <location>
        <begin position="333"/>
        <end position="339"/>
    </location>
</feature>
<feature type="strand" evidence="10">
    <location>
        <begin position="342"/>
        <end position="346"/>
    </location>
</feature>
<feature type="helix" evidence="10">
    <location>
        <begin position="352"/>
        <end position="355"/>
    </location>
</feature>
<feature type="helix" evidence="10">
    <location>
        <begin position="361"/>
        <end position="363"/>
    </location>
</feature>
<feature type="strand" evidence="10">
    <location>
        <begin position="370"/>
        <end position="373"/>
    </location>
</feature>
<feature type="helix" evidence="10">
    <location>
        <begin position="378"/>
        <end position="385"/>
    </location>
</feature>
<feature type="strand" evidence="10">
    <location>
        <begin position="393"/>
        <end position="402"/>
    </location>
</feature>
<feature type="helix" evidence="10">
    <location>
        <begin position="405"/>
        <end position="416"/>
    </location>
</feature>
<feature type="helix" evidence="10">
    <location>
        <begin position="424"/>
        <end position="427"/>
    </location>
</feature>
<feature type="helix" evidence="10">
    <location>
        <begin position="452"/>
        <end position="458"/>
    </location>
</feature>
<feature type="helix" evidence="10">
    <location>
        <begin position="459"/>
        <end position="464"/>
    </location>
</feature>
<feature type="strand" evidence="10">
    <location>
        <begin position="470"/>
        <end position="475"/>
    </location>
</feature>
<feature type="helix" evidence="10">
    <location>
        <begin position="479"/>
        <end position="488"/>
    </location>
</feature>
<feature type="strand" evidence="10">
    <location>
        <begin position="491"/>
        <end position="494"/>
    </location>
</feature>
<feature type="helix" evidence="10">
    <location>
        <begin position="500"/>
        <end position="506"/>
    </location>
</feature>
<feature type="strand" evidence="10">
    <location>
        <begin position="508"/>
        <end position="515"/>
    </location>
</feature>
<feature type="helix" evidence="10">
    <location>
        <begin position="517"/>
        <end position="522"/>
    </location>
</feature>
<feature type="strand" evidence="10">
    <location>
        <begin position="523"/>
        <end position="538"/>
    </location>
</feature>
<feature type="helix" evidence="10">
    <location>
        <begin position="545"/>
        <end position="548"/>
    </location>
</feature>
<keyword id="KW-0002">3D-structure</keyword>
<keyword id="KW-0004">4Fe-4S</keyword>
<keyword id="KW-0408">Iron</keyword>
<keyword id="KW-0411">Iron-sulfur</keyword>
<keyword id="KW-0456">Lyase</keyword>
<keyword id="KW-0479">Metal-binding</keyword>
<keyword id="KW-0496">Mitochondrion</keyword>
<keyword id="KW-1185">Reference proteome</keyword>
<keyword id="KW-0809">Transit peptide</keyword>
<keyword id="KW-0816">Tricarboxylic acid cycle</keyword>
<reference key="1">
    <citation type="journal article" date="2005" name="Science">
        <title>The genome of the kinetoplastid parasite, Leishmania major.</title>
        <authorList>
            <person name="Ivens A.C."/>
            <person name="Peacock C.S."/>
            <person name="Worthey E.A."/>
            <person name="Murphy L."/>
            <person name="Aggarwal G."/>
            <person name="Berriman M."/>
            <person name="Sisk E."/>
            <person name="Rajandream M.A."/>
            <person name="Adlem E."/>
            <person name="Aert R."/>
            <person name="Anupama A."/>
            <person name="Apostolou Z."/>
            <person name="Attipoe P."/>
            <person name="Bason N."/>
            <person name="Bauser C."/>
            <person name="Beck A."/>
            <person name="Beverley S.M."/>
            <person name="Bianchettin G."/>
            <person name="Borzym K."/>
            <person name="Bothe G."/>
            <person name="Bruschi C.V."/>
            <person name="Collins M."/>
            <person name="Cadag E."/>
            <person name="Ciarloni L."/>
            <person name="Clayton C."/>
            <person name="Coulson R.M.R."/>
            <person name="Cronin A."/>
            <person name="Cruz A.K."/>
            <person name="Davies R.M."/>
            <person name="De Gaudenzi J."/>
            <person name="Dobson D.E."/>
            <person name="Duesterhoeft A."/>
            <person name="Fazelina G."/>
            <person name="Fosker N."/>
            <person name="Frasch A.C."/>
            <person name="Fraser A."/>
            <person name="Fuchs M."/>
            <person name="Gabel C."/>
            <person name="Goble A."/>
            <person name="Goffeau A."/>
            <person name="Harris D."/>
            <person name="Hertz-Fowler C."/>
            <person name="Hilbert H."/>
            <person name="Horn D."/>
            <person name="Huang Y."/>
            <person name="Klages S."/>
            <person name="Knights A."/>
            <person name="Kube M."/>
            <person name="Larke N."/>
            <person name="Litvin L."/>
            <person name="Lord A."/>
            <person name="Louie T."/>
            <person name="Marra M."/>
            <person name="Masuy D."/>
            <person name="Matthews K."/>
            <person name="Michaeli S."/>
            <person name="Mottram J.C."/>
            <person name="Mueller-Auer S."/>
            <person name="Munden H."/>
            <person name="Nelson S."/>
            <person name="Norbertczak H."/>
            <person name="Oliver K."/>
            <person name="O'neil S."/>
            <person name="Pentony M."/>
            <person name="Pohl T.M."/>
            <person name="Price C."/>
            <person name="Purnelle B."/>
            <person name="Quail M.A."/>
            <person name="Rabbinowitsch E."/>
            <person name="Reinhardt R."/>
            <person name="Rieger M."/>
            <person name="Rinta J."/>
            <person name="Robben J."/>
            <person name="Robertson L."/>
            <person name="Ruiz J.C."/>
            <person name="Rutter S."/>
            <person name="Saunders D."/>
            <person name="Schaefer M."/>
            <person name="Schein J."/>
            <person name="Schwartz D.C."/>
            <person name="Seeger K."/>
            <person name="Seyler A."/>
            <person name="Sharp S."/>
            <person name="Shin H."/>
            <person name="Sivam D."/>
            <person name="Squares R."/>
            <person name="Squares S."/>
            <person name="Tosato V."/>
            <person name="Vogt C."/>
            <person name="Volckaert G."/>
            <person name="Wambutt R."/>
            <person name="Warren T."/>
            <person name="Wedler H."/>
            <person name="Woodward J."/>
            <person name="Zhou S."/>
            <person name="Zimmermann W."/>
            <person name="Smith D.F."/>
            <person name="Blackwell J.M."/>
            <person name="Stuart K.D."/>
            <person name="Barrell B.G."/>
            <person name="Myler P.J."/>
        </authorList>
    </citation>
    <scope>NUCLEOTIDE SEQUENCE [LARGE SCALE GENOMIC DNA]</scope>
    <source>
        <strain>MHOM/IL/81/Friedlin</strain>
    </source>
</reference>
<reference key="2">
    <citation type="journal article" date="2012" name="Int. J. Biol. Macromol.">
        <title>Fumarate hydratase isoforms of Leishmania major: subcellular localization, structural and kinetic properties.</title>
        <authorList>
            <person name="Feliciano P.R."/>
            <person name="Gupta S."/>
            <person name="Dyszy F."/>
            <person name="Dias-Baruffi M."/>
            <person name="Costa-Filho A.J."/>
            <person name="Michels P.A."/>
            <person name="Nonato M.C."/>
        </authorList>
    </citation>
    <scope>FUNCTION</scope>
    <scope>CATALYTIC ACTIVITY</scope>
    <scope>BIOPHYSICOCHEMICAL PROPERTIES</scope>
    <scope>SUBCELLULAR LOCATION</scope>
</reference>
<reference key="3">
    <citation type="journal article" date="2019" name="ACS Chem. Biol.">
        <title>Crystal structures of fumarate hydratases from Leishmania major in a complex with inhibitor 2-thiomalate.</title>
        <authorList>
            <person name="Feliciano P.R."/>
            <person name="Drennan C.L."/>
            <person name="Nonato M.C."/>
        </authorList>
    </citation>
    <scope>X-RAY CRYSTALLOGRAPHY (2.05 ANGSTROMS) OF 10-549 IN COMPLEX WITH IRON-SULFUR AND 2-THIOMALATE INHIBITOR</scope>
    <scope>FUNCTION</scope>
    <scope>CATALYTIC ACTIVITY</scope>
    <scope>COFACTOR</scope>
    <scope>SUBUNIT</scope>
    <scope>ACTIVITY REGULATION</scope>
</reference>
<protein>
    <recommendedName>
        <fullName>Fumarate hydratase 1, mitochondrial</fullName>
        <shortName evidence="6">Fumarase 1</shortName>
        <shortName evidence="6">LmFH-1</shortName>
        <ecNumber evidence="4 5">4.2.1.2</ecNumber>
    </recommendedName>
</protein>
<dbReference type="EC" id="4.2.1.2" evidence="4 5"/>
<dbReference type="EMBL" id="FR796420">
    <property type="protein sequence ID" value="CAJ04118.1"/>
    <property type="molecule type" value="Genomic_DNA"/>
</dbReference>
<dbReference type="RefSeq" id="XP_001683549.1">
    <property type="nucleotide sequence ID" value="XM_001683497.1"/>
</dbReference>
<dbReference type="PDB" id="6MSO">
    <property type="method" value="X-ray"/>
    <property type="resolution" value="2.05 A"/>
    <property type="chains" value="A/B/C/D=10-549"/>
</dbReference>
<dbReference type="PDBsum" id="6MSO"/>
<dbReference type="SMR" id="Q4QAU9"/>
<dbReference type="STRING" id="5664.Q4QAU9"/>
<dbReference type="EnsemblProtists" id="CAJ04118">
    <property type="protein sequence ID" value="CAJ04118"/>
    <property type="gene ID" value="LMJF_24_0320"/>
</dbReference>
<dbReference type="GeneID" id="5652198"/>
<dbReference type="KEGG" id="lma:LMJF_24_0320"/>
<dbReference type="VEuPathDB" id="TriTrypDB:LmjF.24.0320"/>
<dbReference type="VEuPathDB" id="TriTrypDB:LMJFC_240008600"/>
<dbReference type="VEuPathDB" id="TriTrypDB:LMJLV39_240008400"/>
<dbReference type="VEuPathDB" id="TriTrypDB:LMJSD75_240008100"/>
<dbReference type="eggNOG" id="ENOG502QT04">
    <property type="taxonomic scope" value="Eukaryota"/>
</dbReference>
<dbReference type="HOGENOM" id="CLU_026758_0_0_1"/>
<dbReference type="InParanoid" id="Q4QAU9"/>
<dbReference type="OMA" id="SMYDEKN"/>
<dbReference type="UniPathway" id="UPA00223">
    <property type="reaction ID" value="UER01007"/>
</dbReference>
<dbReference type="Proteomes" id="UP000000542">
    <property type="component" value="Chromosome 24"/>
</dbReference>
<dbReference type="GO" id="GO:0005737">
    <property type="term" value="C:cytoplasm"/>
    <property type="evidence" value="ECO:0000266"/>
    <property type="project" value="GeneDB"/>
</dbReference>
<dbReference type="GO" id="GO:0005829">
    <property type="term" value="C:cytosol"/>
    <property type="evidence" value="ECO:0000318"/>
    <property type="project" value="GO_Central"/>
</dbReference>
<dbReference type="GO" id="GO:0005739">
    <property type="term" value="C:mitochondrion"/>
    <property type="evidence" value="ECO:0000314"/>
    <property type="project" value="UniProtKB"/>
</dbReference>
<dbReference type="GO" id="GO:0051539">
    <property type="term" value="F:4 iron, 4 sulfur cluster binding"/>
    <property type="evidence" value="ECO:0000314"/>
    <property type="project" value="UniProtKB"/>
</dbReference>
<dbReference type="GO" id="GO:0004333">
    <property type="term" value="F:fumarate hydratase activity"/>
    <property type="evidence" value="ECO:0000314"/>
    <property type="project" value="UniProtKB"/>
</dbReference>
<dbReference type="GO" id="GO:0046872">
    <property type="term" value="F:metal ion binding"/>
    <property type="evidence" value="ECO:0007669"/>
    <property type="project" value="UniProtKB-KW"/>
</dbReference>
<dbReference type="GO" id="GO:0042803">
    <property type="term" value="F:protein homodimerization activity"/>
    <property type="evidence" value="ECO:0000314"/>
    <property type="project" value="UniProtKB"/>
</dbReference>
<dbReference type="GO" id="GO:0006106">
    <property type="term" value="P:fumarate metabolic process"/>
    <property type="evidence" value="ECO:0000314"/>
    <property type="project" value="UniProtKB"/>
</dbReference>
<dbReference type="GO" id="GO:0006108">
    <property type="term" value="P:malate metabolic process"/>
    <property type="evidence" value="ECO:0000314"/>
    <property type="project" value="UniProtKB"/>
</dbReference>
<dbReference type="GO" id="GO:0006099">
    <property type="term" value="P:tricarboxylic acid cycle"/>
    <property type="evidence" value="ECO:0000318"/>
    <property type="project" value="GO_Central"/>
</dbReference>
<dbReference type="FunFam" id="3.20.130.10:FF:000001">
    <property type="entry name" value="Fumarate hydratase class I"/>
    <property type="match status" value="1"/>
</dbReference>
<dbReference type="Gene3D" id="3.20.130.10">
    <property type="entry name" value="Fe-S hydro-lyase, tartrate dehydratase beta-type, catalytic domain"/>
    <property type="match status" value="1"/>
</dbReference>
<dbReference type="InterPro" id="IPR051208">
    <property type="entry name" value="Class-I_Fumarase/Tartrate_DH"/>
</dbReference>
<dbReference type="InterPro" id="IPR004646">
    <property type="entry name" value="Fe-S_hydro-lyase_TtdA-typ_cat"/>
</dbReference>
<dbReference type="InterPro" id="IPR004647">
    <property type="entry name" value="Fe-S_hydro-lyase_TtdB-typ_cat"/>
</dbReference>
<dbReference type="InterPro" id="IPR036660">
    <property type="entry name" value="Fe-S_hydroAse_TtdB_cat_sf"/>
</dbReference>
<dbReference type="InterPro" id="IPR011167">
    <property type="entry name" value="Fe_dep_fumarate_hydratase"/>
</dbReference>
<dbReference type="InterPro" id="IPR020557">
    <property type="entry name" value="Fumarate_lyase_CS"/>
</dbReference>
<dbReference type="NCBIfam" id="TIGR00723">
    <property type="entry name" value="ttdB_fumA_fumB"/>
    <property type="match status" value="1"/>
</dbReference>
<dbReference type="PANTHER" id="PTHR30389:SF0">
    <property type="entry name" value="FUMARATE HYDRATASE CLASS I, AEROBIC"/>
    <property type="match status" value="1"/>
</dbReference>
<dbReference type="PANTHER" id="PTHR30389">
    <property type="entry name" value="FUMARATE HYDRATASE-RELATED"/>
    <property type="match status" value="1"/>
</dbReference>
<dbReference type="Pfam" id="PF05681">
    <property type="entry name" value="Fumerase"/>
    <property type="match status" value="1"/>
</dbReference>
<dbReference type="Pfam" id="PF05683">
    <property type="entry name" value="Fumerase_C"/>
    <property type="match status" value="1"/>
</dbReference>
<dbReference type="PIRSF" id="PIRSF001394">
    <property type="entry name" value="Fe_dep_fumar_hy"/>
    <property type="match status" value="1"/>
</dbReference>
<dbReference type="SUPFAM" id="SSF117457">
    <property type="entry name" value="FumA C-terminal domain-like"/>
    <property type="match status" value="1"/>
</dbReference>
<dbReference type="PROSITE" id="PS00163">
    <property type="entry name" value="FUMARATE_LYASES"/>
    <property type="match status" value="1"/>
</dbReference>
<sequence length="549" mass="60808">MLRRLAPLLAEFNFVPLVSKVSHKETKYRLLTKDYVSVVQPGAGLPEMLRVDPAALTLLSSTAFDDVEHLLRSSHLMSLRKIFDDPEASDNDKFVALQLLKNANISSARLLPGCQDTGTAIIAGYRGDQVFVPGNDEEALSRGVYDIFQKRNFRYSQNVPLSMYDEKNTGTNLPAQIDLYASKGMEYSFMFVAKGGGSANKSFLLQETKSVLNPKSLRNFLKEKLAMFGTSACPPYHVAVVIGGTSAEMTMKVLKYASCHYYDDLITKPDMKTGYTFRDLELEEEVLKVCQNIGMGAQFGGKYYAHDVRVIRMPRHGASCPIGIGVSCSADRQALGKINKDGVWLEELEMEPSQYLPDLKEDELLKTPAVMVNLNRPMPEVLQELSKHPVRTRLSLTGTIIVARDSAHARMREMLEAGKPLPQYMKEHPVYYAGPAKQPDGLPSGSFGPTTAGRMDPFVDLFQSHGGSMVMLAKGNRSKQVTKACHKYGGFYLGSIGGPAAVLAQNAIKKVECLDMKDLGMEAVWRIEVENFPAFIVVDDKGNDFFEQL</sequence>
<evidence type="ECO:0000250" key="1">
    <source>
        <dbReference type="UniProtKB" id="E9AE57"/>
    </source>
</evidence>
<evidence type="ECO:0000250" key="2">
    <source>
        <dbReference type="UniProtKB" id="P0AC33"/>
    </source>
</evidence>
<evidence type="ECO:0000255" key="3"/>
<evidence type="ECO:0000269" key="4">
    <source>
    </source>
</evidence>
<evidence type="ECO:0000269" key="5">
    <source>
    </source>
</evidence>
<evidence type="ECO:0000303" key="6">
    <source>
    </source>
</evidence>
<evidence type="ECO:0000305" key="7"/>
<evidence type="ECO:0000312" key="8">
    <source>
        <dbReference type="EMBL" id="CAJ04118.1"/>
    </source>
</evidence>
<evidence type="ECO:0007744" key="9">
    <source>
        <dbReference type="PDB" id="6MSO"/>
    </source>
</evidence>
<evidence type="ECO:0007829" key="10">
    <source>
        <dbReference type="PDB" id="6MSO"/>
    </source>
</evidence>
<accession>Q4QAU9</accession>
<proteinExistence type="evidence at protein level"/>